<sequence>MLIENTNDRFGIVIDAGSSGSRIHVFKWQDTESLLHATNQDSQSILQSVPHIHQEKDWTFKLNPGLSSFEKKPQDAYKSHIKPLLDFAKNIIPESHWSSCPVFIQATAGMRLLPQDIQSSILDGLCQGLKHPAEFLVEDCSAQIQVIDGETEGLYGWLGLNYLYGHFNDYNPEVSDHFTFGFMDMGGASTQIAFAPHDSGEIARHRDDIATIFLRSVNGDLQKWDVFVSTWLGFGANQARRRYLAQLINTLPENTNDYENDDFSTRNLNDPCMPRGSSTDFEFKDTIFHIAGSGNYEQCTKSIYPLLLKNMPCDDEPCLFNGVHAPRIDFANDKFIGTSEYWYTANDVFKLGGEYNFDKFSKSLREFCNSNWTQILANSDKGVYNSIPENFLKDACFKGNWVLNILHEGFDMPRIDVDAENVNDRPLFQSVEKVEERELSWTLGRILLYASGSILAGNDDFMVGIAPSERRTKLTGKKFIPGKLLESDQLRKQSSSLSNKGFLMWFAIICCIFYLIFHRSHIIRRRFSGLYNITKDFKTGIRRRLKFLRRSDPFSRLEEGELGTDVDGFKDVYRMKSSSMFDLGKSSATMQREHEPQRTASQSANLAPSNLRPAFSMADFSKFKDSRLYD</sequence>
<reference key="1">
    <citation type="journal article" date="1999" name="J. Biol. Chem.">
        <title>YND1, a homologue of GDA1, encodes membrane-bound apyrase required for Golgi N- and O-glycosylation in Saccharomyces cerevisiae.</title>
        <authorList>
            <person name="Gao X.D."/>
            <person name="Kaigorodov V."/>
            <person name="Jigami Y."/>
        </authorList>
    </citation>
    <scope>NUCLEOTIDE SEQUENCE [GENOMIC DNA]</scope>
    <scope>FUNCTION</scope>
    <scope>SUBCELLULAR LOCATION</scope>
    <source>
        <strain>ATCC 204508 / S288c</strain>
    </source>
</reference>
<reference key="2">
    <citation type="journal article" date="1997" name="Nature">
        <title>The nucleotide sequence of Saccharomyces cerevisiae chromosome V.</title>
        <authorList>
            <person name="Dietrich F.S."/>
            <person name="Mulligan J.T."/>
            <person name="Hennessy K.M."/>
            <person name="Yelton M.A."/>
            <person name="Allen E."/>
            <person name="Araujo R."/>
            <person name="Aviles E."/>
            <person name="Berno A."/>
            <person name="Brennan T."/>
            <person name="Carpenter J."/>
            <person name="Chen E."/>
            <person name="Cherry J.M."/>
            <person name="Chung E."/>
            <person name="Duncan M."/>
            <person name="Guzman E."/>
            <person name="Hartzell G."/>
            <person name="Hunicke-Smith S."/>
            <person name="Hyman R.W."/>
            <person name="Kayser A."/>
            <person name="Komp C."/>
            <person name="Lashkari D."/>
            <person name="Lew H."/>
            <person name="Lin D."/>
            <person name="Mosedale D."/>
            <person name="Nakahara K."/>
            <person name="Namath A."/>
            <person name="Norgren R."/>
            <person name="Oefner P."/>
            <person name="Oh C."/>
            <person name="Petel F.X."/>
            <person name="Roberts D."/>
            <person name="Sehl P."/>
            <person name="Schramm S."/>
            <person name="Shogren T."/>
            <person name="Smith V."/>
            <person name="Taylor P."/>
            <person name="Wei Y."/>
            <person name="Botstein D."/>
            <person name="Davis R.W."/>
        </authorList>
    </citation>
    <scope>NUCLEOTIDE SEQUENCE [LARGE SCALE GENOMIC DNA]</scope>
    <source>
        <strain>ATCC 204508 / S288c</strain>
    </source>
</reference>
<reference key="3">
    <citation type="journal article" date="2014" name="G3 (Bethesda)">
        <title>The reference genome sequence of Saccharomyces cerevisiae: Then and now.</title>
        <authorList>
            <person name="Engel S.R."/>
            <person name="Dietrich F.S."/>
            <person name="Fisk D.G."/>
            <person name="Binkley G."/>
            <person name="Balakrishnan R."/>
            <person name="Costanzo M.C."/>
            <person name="Dwight S.S."/>
            <person name="Hitz B.C."/>
            <person name="Karra K."/>
            <person name="Nash R.S."/>
            <person name="Weng S."/>
            <person name="Wong E.D."/>
            <person name="Lloyd P."/>
            <person name="Skrzypek M.S."/>
            <person name="Miyasato S.R."/>
            <person name="Simison M."/>
            <person name="Cherry J.M."/>
        </authorList>
    </citation>
    <scope>GENOME REANNOTATION</scope>
    <source>
        <strain>ATCC 204508 / S288c</strain>
    </source>
</reference>
<reference key="4">
    <citation type="journal article" date="2007" name="Genome Res.">
        <title>Approaching a complete repository of sequence-verified protein-encoding clones for Saccharomyces cerevisiae.</title>
        <authorList>
            <person name="Hu Y."/>
            <person name="Rolfs A."/>
            <person name="Bhullar B."/>
            <person name="Murthy T.V.S."/>
            <person name="Zhu C."/>
            <person name="Berger M.F."/>
            <person name="Camargo A.A."/>
            <person name="Kelley F."/>
            <person name="McCarron S."/>
            <person name="Jepson D."/>
            <person name="Richardson A."/>
            <person name="Raphael J."/>
            <person name="Moreira D."/>
            <person name="Taycher E."/>
            <person name="Zuo D."/>
            <person name="Mohr S."/>
            <person name="Kane M.F."/>
            <person name="Williamson J."/>
            <person name="Simpson A.J.G."/>
            <person name="Bulyk M.L."/>
            <person name="Harlow E."/>
            <person name="Marsischky G."/>
            <person name="Kolodner R.D."/>
            <person name="LaBaer J."/>
        </authorList>
    </citation>
    <scope>NUCLEOTIDE SEQUENCE [GENOMIC DNA]</scope>
    <source>
        <strain>ATCC 204508 / S288c</strain>
    </source>
</reference>
<reference key="5">
    <citation type="journal article" date="2000" name="J. Biol. Chem.">
        <title>Regulation of yeast ectoapyrase ynd1p activity by activator subunit Vma13p of vacuolar H+-ATPase.</title>
        <authorList>
            <person name="Zhong X."/>
            <person name="Malhotra R."/>
            <person name="Guidotti G."/>
        </authorList>
    </citation>
    <scope>ENZYMATIC ACTIVITY</scope>
    <scope>ACTIVITY REGULATION</scope>
    <scope>INTERACTION WITH VMA13</scope>
</reference>
<reference key="6">
    <citation type="journal article" date="2003" name="Nature">
        <title>Global analysis of protein localization in budding yeast.</title>
        <authorList>
            <person name="Huh W.-K."/>
            <person name="Falvo J.V."/>
            <person name="Gerke L.C."/>
            <person name="Carroll A.S."/>
            <person name="Howson R.W."/>
            <person name="Weissman J.S."/>
            <person name="O'Shea E.K."/>
        </authorList>
    </citation>
    <scope>SUBCELLULAR LOCATION [LARGE SCALE ANALYSIS]</scope>
</reference>
<reference key="7">
    <citation type="journal article" date="2003" name="Nature">
        <title>Global analysis of protein expression in yeast.</title>
        <authorList>
            <person name="Ghaemmaghami S."/>
            <person name="Huh W.-K."/>
            <person name="Bower K."/>
            <person name="Howson R.W."/>
            <person name="Belle A."/>
            <person name="Dephoure N."/>
            <person name="O'Shea E.K."/>
            <person name="Weissman J.S."/>
        </authorList>
    </citation>
    <scope>LEVEL OF PROTEIN EXPRESSION [LARGE SCALE ANALYSIS]</scope>
</reference>
<reference key="8">
    <citation type="journal article" date="2005" name="J. Biol. Chem.">
        <title>YND1 interacts with CDC55 and is a novel mediator of E4orf4-induced toxicity.</title>
        <authorList>
            <person name="Maoz T."/>
            <person name="Koren R."/>
            <person name="Ben-Ari I."/>
            <person name="Kleinberger T."/>
        </authorList>
    </citation>
    <scope>FUNCTION</scope>
    <scope>ENZYMATIC ACTIVITY</scope>
    <scope>INTERACTION WITH CDC55</scope>
    <scope>DISRUPTION PHENOTYPE</scope>
    <scope>MUTAGENESIS OF GLU-152 AND SER-189</scope>
</reference>
<reference key="9">
    <citation type="journal article" date="2006" name="Genetics">
        <title>Cumulative mutations affecting sterol biosynthesis in the yeast Saccharomyces cerevisiae result in synthetic lethality that is suppressed by alterations in sphingolipid profiles.</title>
        <authorList>
            <person name="Valachovic M."/>
            <person name="Bareither B.M."/>
            <person name="Bhuiyan M.S.A."/>
            <person name="Eckstein J."/>
            <person name="Barbuch R."/>
            <person name="Balderes D."/>
            <person name="Wilcox L."/>
            <person name="Sturley S.L."/>
            <person name="Dickson R.C."/>
            <person name="Bard M."/>
        </authorList>
    </citation>
    <scope>FUNCTION</scope>
    <scope>DISRUPTION PHENOTYPE</scope>
</reference>
<reference key="10">
    <citation type="journal article" date="2008" name="Mol. Cell. Proteomics">
        <title>A multidimensional chromatography technology for in-depth phosphoproteome analysis.</title>
        <authorList>
            <person name="Albuquerque C.P."/>
            <person name="Smolka M.B."/>
            <person name="Payne S.H."/>
            <person name="Bafna V."/>
            <person name="Eng J."/>
            <person name="Zhou H."/>
        </authorList>
    </citation>
    <scope>IDENTIFICATION BY MASS SPECTROMETRY [LARGE SCALE ANALYSIS]</scope>
</reference>
<reference key="11">
    <citation type="journal article" date="2012" name="Proc. Natl. Acad. Sci. U.S.A.">
        <title>N-terminal acetylome analyses and functional insights of the N-terminal acetyltransferase NatB.</title>
        <authorList>
            <person name="Van Damme P."/>
            <person name="Lasa M."/>
            <person name="Polevoda B."/>
            <person name="Gazquez C."/>
            <person name="Elosegui-Artola A."/>
            <person name="Kim D.S."/>
            <person name="De Juan-Pardo E."/>
            <person name="Demeyer K."/>
            <person name="Hole K."/>
            <person name="Larrea E."/>
            <person name="Timmerman E."/>
            <person name="Prieto J."/>
            <person name="Arnesen T."/>
            <person name="Sherman F."/>
            <person name="Gevaert K."/>
            <person name="Aldabe R."/>
        </authorList>
    </citation>
    <scope>IDENTIFICATION BY MASS SPECTROMETRY [LARGE SCALE ANALYSIS]</scope>
</reference>
<proteinExistence type="evidence at protein level"/>
<feature type="chain" id="PRO_0000209920" description="Golgi apyrase">
    <location>
        <begin position="1"/>
        <end position="630"/>
    </location>
</feature>
<feature type="topological domain" description="Lumenal" evidence="2">
    <location>
        <begin position="1"/>
        <end position="500"/>
    </location>
</feature>
<feature type="transmembrane region" description="Helical" evidence="2">
    <location>
        <begin position="501"/>
        <end position="517"/>
    </location>
</feature>
<feature type="topological domain" description="Cytoplasmic" evidence="2">
    <location>
        <begin position="518"/>
        <end position="630"/>
    </location>
</feature>
<feature type="region of interest" description="Disordered" evidence="3">
    <location>
        <begin position="586"/>
        <end position="606"/>
    </location>
</feature>
<feature type="active site" description="Proton acceptor" evidence="1">
    <location>
        <position position="152"/>
    </location>
</feature>
<feature type="mutagenesis site" description="Expressed at lower levels. GTPase activity reduced." evidence="8">
    <original>E</original>
    <variation>Q</variation>
    <location>
        <position position="152"/>
    </location>
</feature>
<feature type="mutagenesis site" description="Expressed at the same level as wild-type. GTPase and GDPase activities decreased more than 20-fold toward GTP and 3-fold for GDP." evidence="8">
    <original>S</original>
    <variation>A</variation>
    <location>
        <position position="189"/>
    </location>
</feature>
<feature type="sequence conflict" description="In Ref. 4; AAT92897." evidence="10" ref="4">
    <original>S</original>
    <variation>P</variation>
    <location>
        <position position="498"/>
    </location>
</feature>
<dbReference type="EC" id="3.6.1.5"/>
<dbReference type="EMBL" id="AF203695">
    <property type="protein sequence ID" value="AAF17573.1"/>
    <property type="molecule type" value="Genomic_DNA"/>
</dbReference>
<dbReference type="EMBL" id="U18778">
    <property type="protein sequence ID" value="AAB64538.1"/>
    <property type="molecule type" value="Genomic_DNA"/>
</dbReference>
<dbReference type="EMBL" id="AY692878">
    <property type="protein sequence ID" value="AAT92897.1"/>
    <property type="molecule type" value="Genomic_DNA"/>
</dbReference>
<dbReference type="EMBL" id="BK006939">
    <property type="protein sequence ID" value="DAA07655.1"/>
    <property type="molecule type" value="Genomic_DNA"/>
</dbReference>
<dbReference type="PIR" id="S50463">
    <property type="entry name" value="S50463"/>
</dbReference>
<dbReference type="RefSeq" id="NP_010920.3">
    <property type="nucleotide sequence ID" value="NM_001178896.3"/>
</dbReference>
<dbReference type="SMR" id="P40009"/>
<dbReference type="BioGRID" id="36735">
    <property type="interactions" value="105"/>
</dbReference>
<dbReference type="DIP" id="DIP-7607N"/>
<dbReference type="FunCoup" id="P40009">
    <property type="interactions" value="316"/>
</dbReference>
<dbReference type="IntAct" id="P40009">
    <property type="interactions" value="8"/>
</dbReference>
<dbReference type="MINT" id="P40009"/>
<dbReference type="STRING" id="4932.YER005W"/>
<dbReference type="iPTMnet" id="P40009"/>
<dbReference type="PaxDb" id="4932-YER005W"/>
<dbReference type="PeptideAtlas" id="P40009"/>
<dbReference type="EnsemblFungi" id="YER005W_mRNA">
    <property type="protein sequence ID" value="YER005W"/>
    <property type="gene ID" value="YER005W"/>
</dbReference>
<dbReference type="GeneID" id="856722"/>
<dbReference type="KEGG" id="sce:YER005W"/>
<dbReference type="AGR" id="SGD:S000000807"/>
<dbReference type="SGD" id="S000000807">
    <property type="gene designation" value="YND1"/>
</dbReference>
<dbReference type="VEuPathDB" id="FungiDB:YER005W"/>
<dbReference type="eggNOG" id="KOG1386">
    <property type="taxonomic scope" value="Eukaryota"/>
</dbReference>
<dbReference type="GeneTree" id="ENSGT01110000267240"/>
<dbReference type="HOGENOM" id="CLU_010246_3_3_1"/>
<dbReference type="InParanoid" id="P40009"/>
<dbReference type="OMA" id="HESIGFM"/>
<dbReference type="OrthoDB" id="6372431at2759"/>
<dbReference type="BioCyc" id="MetaCyc:G3O-30192-MONOMER"/>
<dbReference type="BioCyc" id="YEAST:G3O-30192-MONOMER"/>
<dbReference type="Reactome" id="R-SCE-8850843">
    <property type="pathway name" value="Phosphate bond hydrolysis by NTPDase proteins"/>
</dbReference>
<dbReference type="UniPathway" id="UPA00378"/>
<dbReference type="BioGRID-ORCS" id="856722">
    <property type="hits" value="4 hits in 10 CRISPR screens"/>
</dbReference>
<dbReference type="PRO" id="PR:P40009"/>
<dbReference type="Proteomes" id="UP000002311">
    <property type="component" value="Chromosome V"/>
</dbReference>
<dbReference type="RNAct" id="P40009">
    <property type="molecule type" value="protein"/>
</dbReference>
<dbReference type="GO" id="GO:0005794">
    <property type="term" value="C:Golgi apparatus"/>
    <property type="evidence" value="ECO:0007005"/>
    <property type="project" value="SGD"/>
</dbReference>
<dbReference type="GO" id="GO:0000139">
    <property type="term" value="C:Golgi membrane"/>
    <property type="evidence" value="ECO:0000314"/>
    <property type="project" value="SGD"/>
</dbReference>
<dbReference type="GO" id="GO:0016020">
    <property type="term" value="C:membrane"/>
    <property type="evidence" value="ECO:0000318"/>
    <property type="project" value="GO_Central"/>
</dbReference>
<dbReference type="GO" id="GO:0004050">
    <property type="term" value="F:apyrase activity"/>
    <property type="evidence" value="ECO:0007669"/>
    <property type="project" value="UniProtKB-EC"/>
</dbReference>
<dbReference type="GO" id="GO:0005524">
    <property type="term" value="F:ATP binding"/>
    <property type="evidence" value="ECO:0007669"/>
    <property type="project" value="UniProtKB-KW"/>
</dbReference>
<dbReference type="GO" id="GO:0004382">
    <property type="term" value="F:GDP phosphatase activity"/>
    <property type="evidence" value="ECO:0000318"/>
    <property type="project" value="GO_Central"/>
</dbReference>
<dbReference type="GO" id="GO:0017110">
    <property type="term" value="F:nucleoside diphosphate phosphatase activity"/>
    <property type="evidence" value="ECO:0000314"/>
    <property type="project" value="SGD"/>
</dbReference>
<dbReference type="GO" id="GO:0017111">
    <property type="term" value="F:ribonucleoside triphosphate phosphatase activity"/>
    <property type="evidence" value="ECO:0000314"/>
    <property type="project" value="SGD"/>
</dbReference>
<dbReference type="GO" id="GO:0045134">
    <property type="term" value="F:UDP phosphatase activity"/>
    <property type="evidence" value="ECO:0000318"/>
    <property type="project" value="GO_Central"/>
</dbReference>
<dbReference type="GO" id="GO:0046036">
    <property type="term" value="P:CTP metabolic process"/>
    <property type="evidence" value="ECO:0000318"/>
    <property type="project" value="GO_Central"/>
</dbReference>
<dbReference type="GO" id="GO:0006486">
    <property type="term" value="P:protein glycosylation"/>
    <property type="evidence" value="ECO:0000315"/>
    <property type="project" value="SGD"/>
</dbReference>
<dbReference type="GO" id="GO:0006665">
    <property type="term" value="P:sphingolipid metabolic process"/>
    <property type="evidence" value="ECO:0007669"/>
    <property type="project" value="UniProtKB-KW"/>
</dbReference>
<dbReference type="GO" id="GO:0006256">
    <property type="term" value="P:UDP catabolic process"/>
    <property type="evidence" value="ECO:0000318"/>
    <property type="project" value="GO_Central"/>
</dbReference>
<dbReference type="CDD" id="cd24039">
    <property type="entry name" value="ASKHA_NBD_YND1-like"/>
    <property type="match status" value="1"/>
</dbReference>
<dbReference type="Gene3D" id="3.30.420.40">
    <property type="match status" value="1"/>
</dbReference>
<dbReference type="Gene3D" id="3.30.420.150">
    <property type="entry name" value="Exopolyphosphatase. Domain 2"/>
    <property type="match status" value="1"/>
</dbReference>
<dbReference type="InterPro" id="IPR000407">
    <property type="entry name" value="GDA1_CD39_NTPase"/>
</dbReference>
<dbReference type="PANTHER" id="PTHR11782">
    <property type="entry name" value="ADENOSINE/GUANOSINE DIPHOSPHATASE"/>
    <property type="match status" value="1"/>
</dbReference>
<dbReference type="PANTHER" id="PTHR11782:SF121">
    <property type="entry name" value="NUCLEOSIDE-DIPHOSPHATASE MIG-23"/>
    <property type="match status" value="1"/>
</dbReference>
<dbReference type="Pfam" id="PF01150">
    <property type="entry name" value="GDA1_CD39"/>
    <property type="match status" value="1"/>
</dbReference>
<dbReference type="PROSITE" id="PS01238">
    <property type="entry name" value="GDA1_CD39_NTPASE"/>
    <property type="match status" value="1"/>
</dbReference>
<name>YND1_YEAST</name>
<protein>
    <recommendedName>
        <fullName>Golgi apyrase</fullName>
        <ecNumber>3.6.1.5</ecNumber>
    </recommendedName>
    <alternativeName>
        <fullName>ATP-diphosphatase</fullName>
    </alternativeName>
    <alternativeName>
        <fullName>ATP-diphosphohydrolase</fullName>
    </alternativeName>
    <alternativeName>
        <fullName>Adenosine diphosphatase</fullName>
        <shortName>ADPase</shortName>
    </alternativeName>
    <alternativeName>
        <fullName>Golgi nucleoside diphosphatase</fullName>
    </alternativeName>
    <alternativeName>
        <fullName>Yeast nucleoside diphosphatase 1</fullName>
    </alternativeName>
</protein>
<comment type="function">
    <text evidence="4 8 9">Catalyzes the hydrolysis of phosphoanhydride bonds of nucleoside tri- and di-phosphates. Has equal high activity toward ADP/ATP, GDP/GTP, and UDP/UTP and approximately 50% less toward CDP/CTP and thiamine pyrophosphate. Has no activity toward GMP. Required for Golgi glycosylation and cell wall integrity. Together with CDC55, required for adenovirus E4orf4 (early region 4 open reading frame 4) induced toxicity, the apyrase activity is not required for this function. Plays a role in sphingolipid synthesis.</text>
</comment>
<comment type="catalytic activity">
    <reaction evidence="5 8">
        <text>a ribonucleoside 5'-triphosphate + 2 H2O = a ribonucleoside 5'-phosphate + 2 phosphate + 2 H(+)</text>
        <dbReference type="Rhea" id="RHEA:36795"/>
        <dbReference type="ChEBI" id="CHEBI:15377"/>
        <dbReference type="ChEBI" id="CHEBI:15378"/>
        <dbReference type="ChEBI" id="CHEBI:43474"/>
        <dbReference type="ChEBI" id="CHEBI:58043"/>
        <dbReference type="ChEBI" id="CHEBI:61557"/>
        <dbReference type="EC" id="3.6.1.5"/>
    </reaction>
</comment>
<comment type="cofactor">
    <cofactor evidence="1">
        <name>Ca(2+)</name>
        <dbReference type="ChEBI" id="CHEBI:29108"/>
    </cofactor>
    <cofactor evidence="1">
        <name>Mg(2+)</name>
        <dbReference type="ChEBI" id="CHEBI:18420"/>
    </cofactor>
    <cofactor evidence="1">
        <name>Mn(2+)</name>
        <dbReference type="ChEBI" id="CHEBI:29035"/>
    </cofactor>
    <text evidence="1">A divalent cation Ca(2+), Mg(2+) or Mn(2+).</text>
</comment>
<comment type="activity regulation">
    <text evidence="5">Activity is inhibited both by interaction with VMA13 and by V-ATPase acidification of the lumen. The activity of VMA13 is not required for YND1 inhibition.</text>
</comment>
<comment type="pathway">
    <text>Protein modification; protein glycosylation.</text>
</comment>
<comment type="subunit">
    <text evidence="5 8">Interacts with activator subunit VMA13 of vacuolar H(+)-ATPase. Interacts with CDC55; this interaction is disrupted by adenovirus E4orf4, which remains associated with both YND1 and CDC55.</text>
</comment>
<comment type="subcellular location">
    <subcellularLocation>
        <location evidence="4 6">Golgi apparatus</location>
    </subcellularLocation>
    <subcellularLocation>
        <location evidence="10">Membrane</location>
        <topology evidence="10">Single-pass membrane protein</topology>
    </subcellularLocation>
</comment>
<comment type="disruption phenotype">
    <text evidence="8 9">Cells are partially resistant to E4orf4 and can partially suppress the spindle checkpoint defect in CDC55 deletion mutant. Does not suppress the rapamycin-resistance of CDC55 deletion mutant. YND1 and CDC55 double mutant is fully resistant to E4orf4. Deletion mutant suppresses the synthetic lethality of triple mutants, where UPC2 and ECM22 are knocked out along with either HAP1, ERG6 or ERG28.</text>
</comment>
<comment type="miscellaneous">
    <text evidence="7">Present with 450 molecules/cell in log phase SD medium.</text>
</comment>
<comment type="similarity">
    <text evidence="10">Belongs to the GDA1/CD39 NTPase family.</text>
</comment>
<organism>
    <name type="scientific">Saccharomyces cerevisiae (strain ATCC 204508 / S288c)</name>
    <name type="common">Baker's yeast</name>
    <dbReference type="NCBI Taxonomy" id="559292"/>
    <lineage>
        <taxon>Eukaryota</taxon>
        <taxon>Fungi</taxon>
        <taxon>Dikarya</taxon>
        <taxon>Ascomycota</taxon>
        <taxon>Saccharomycotina</taxon>
        <taxon>Saccharomycetes</taxon>
        <taxon>Saccharomycetales</taxon>
        <taxon>Saccharomycetaceae</taxon>
        <taxon>Saccharomyces</taxon>
    </lineage>
</organism>
<accession>P40009</accession>
<accession>D3DLQ1</accession>
<accession>Q6B252</accession>
<keyword id="KW-0067">ATP-binding</keyword>
<keyword id="KW-0333">Golgi apparatus</keyword>
<keyword id="KW-0378">Hydrolase</keyword>
<keyword id="KW-0443">Lipid metabolism</keyword>
<keyword id="KW-0472">Membrane</keyword>
<keyword id="KW-0547">Nucleotide-binding</keyword>
<keyword id="KW-1185">Reference proteome</keyword>
<keyword id="KW-0746">Sphingolipid metabolism</keyword>
<keyword id="KW-0812">Transmembrane</keyword>
<keyword id="KW-1133">Transmembrane helix</keyword>
<gene>
    <name type="primary">YND1</name>
    <name type="ordered locus">YER005W</name>
</gene>
<evidence type="ECO:0000250" key="1"/>
<evidence type="ECO:0000255" key="2"/>
<evidence type="ECO:0000256" key="3">
    <source>
        <dbReference type="SAM" id="MobiDB-lite"/>
    </source>
</evidence>
<evidence type="ECO:0000269" key="4">
    <source>
    </source>
</evidence>
<evidence type="ECO:0000269" key="5">
    <source>
    </source>
</evidence>
<evidence type="ECO:0000269" key="6">
    <source>
    </source>
</evidence>
<evidence type="ECO:0000269" key="7">
    <source>
    </source>
</evidence>
<evidence type="ECO:0000269" key="8">
    <source>
    </source>
</evidence>
<evidence type="ECO:0000269" key="9">
    <source>
    </source>
</evidence>
<evidence type="ECO:0000305" key="10"/>